<gene>
    <name evidence="1" type="primary">cobQ</name>
    <name type="ordered locus">Lm4b_01212</name>
</gene>
<accession>C1L2B3</accession>
<keyword id="KW-0169">Cobalamin biosynthesis</keyword>
<keyword id="KW-0315">Glutamine amidotransferase</keyword>
<feature type="chain" id="PRO_1000201969" description="Cobyric acid synthase">
    <location>
        <begin position="1"/>
        <end position="511"/>
    </location>
</feature>
<feature type="domain" description="GATase cobBQ-type" evidence="1">
    <location>
        <begin position="251"/>
        <end position="443"/>
    </location>
</feature>
<feature type="active site" description="Nucleophile" evidence="1">
    <location>
        <position position="332"/>
    </location>
</feature>
<feature type="active site" evidence="1">
    <location>
        <position position="435"/>
    </location>
</feature>
<comment type="function">
    <text evidence="1">Catalyzes amidations at positions B, D, E, and G on adenosylcobyrinic A,C-diamide. NH(2) groups are provided by glutamine, and one molecule of ATP is hydrogenolyzed for each amidation.</text>
</comment>
<comment type="pathway">
    <text evidence="1">Cofactor biosynthesis; adenosylcobalamin biosynthesis.</text>
</comment>
<comment type="similarity">
    <text evidence="1">Belongs to the CobB/CobQ family. CobQ subfamily.</text>
</comment>
<evidence type="ECO:0000255" key="1">
    <source>
        <dbReference type="HAMAP-Rule" id="MF_00028"/>
    </source>
</evidence>
<name>COBQ_LISMC</name>
<organism>
    <name type="scientific">Listeria monocytogenes serotype 4b (strain CLIP80459)</name>
    <dbReference type="NCBI Taxonomy" id="568819"/>
    <lineage>
        <taxon>Bacteria</taxon>
        <taxon>Bacillati</taxon>
        <taxon>Bacillota</taxon>
        <taxon>Bacilli</taxon>
        <taxon>Bacillales</taxon>
        <taxon>Listeriaceae</taxon>
        <taxon>Listeria</taxon>
    </lineage>
</organism>
<reference key="1">
    <citation type="journal article" date="2012" name="BMC Genomics">
        <title>Comparative genomics and transcriptomics of lineages I, II, and III strains of Listeria monocytogenes.</title>
        <authorList>
            <person name="Hain T."/>
            <person name="Ghai R."/>
            <person name="Billion A."/>
            <person name="Kuenne C.T."/>
            <person name="Steinweg C."/>
            <person name="Izar B."/>
            <person name="Mohamed W."/>
            <person name="Mraheil M."/>
            <person name="Domann E."/>
            <person name="Schaffrath S."/>
            <person name="Karst U."/>
            <person name="Goesmann A."/>
            <person name="Oehm S."/>
            <person name="Puhler A."/>
            <person name="Merkl R."/>
            <person name="Vorwerk S."/>
            <person name="Glaser P."/>
            <person name="Garrido P."/>
            <person name="Rusniok C."/>
            <person name="Buchrieser C."/>
            <person name="Goebel W."/>
            <person name="Chakraborty T."/>
        </authorList>
    </citation>
    <scope>NUCLEOTIDE SEQUENCE [LARGE SCALE GENOMIC DNA]</scope>
    <source>
        <strain>CLIP80459</strain>
    </source>
</reference>
<dbReference type="EMBL" id="FM242711">
    <property type="protein sequence ID" value="CAS04979.1"/>
    <property type="molecule type" value="Genomic_DNA"/>
</dbReference>
<dbReference type="RefSeq" id="WP_012681258.1">
    <property type="nucleotide sequence ID" value="NC_012488.1"/>
</dbReference>
<dbReference type="SMR" id="C1L2B3"/>
<dbReference type="KEGG" id="lmc:Lm4b_01212"/>
<dbReference type="HOGENOM" id="CLU_019250_2_2_9"/>
<dbReference type="UniPathway" id="UPA00148"/>
<dbReference type="GO" id="GO:0015420">
    <property type="term" value="F:ABC-type vitamin B12 transporter activity"/>
    <property type="evidence" value="ECO:0007669"/>
    <property type="project" value="UniProtKB-UniRule"/>
</dbReference>
<dbReference type="GO" id="GO:0003824">
    <property type="term" value="F:catalytic activity"/>
    <property type="evidence" value="ECO:0007669"/>
    <property type="project" value="InterPro"/>
</dbReference>
<dbReference type="GO" id="GO:0009236">
    <property type="term" value="P:cobalamin biosynthetic process"/>
    <property type="evidence" value="ECO:0007669"/>
    <property type="project" value="UniProtKB-UniRule"/>
</dbReference>
<dbReference type="CDD" id="cd05389">
    <property type="entry name" value="CobQ_N"/>
    <property type="match status" value="1"/>
</dbReference>
<dbReference type="CDD" id="cd01750">
    <property type="entry name" value="GATase1_CobQ"/>
    <property type="match status" value="1"/>
</dbReference>
<dbReference type="Gene3D" id="3.40.50.880">
    <property type="match status" value="1"/>
</dbReference>
<dbReference type="Gene3D" id="3.40.50.300">
    <property type="entry name" value="P-loop containing nucleotide triphosphate hydrolases"/>
    <property type="match status" value="1"/>
</dbReference>
<dbReference type="HAMAP" id="MF_00028">
    <property type="entry name" value="CobQ"/>
    <property type="match status" value="1"/>
</dbReference>
<dbReference type="InterPro" id="IPR029062">
    <property type="entry name" value="Class_I_gatase-like"/>
</dbReference>
<dbReference type="InterPro" id="IPR002586">
    <property type="entry name" value="CobQ/CobB/MinD/ParA_Nub-bd_dom"/>
</dbReference>
<dbReference type="InterPro" id="IPR033949">
    <property type="entry name" value="CobQ_GATase1"/>
</dbReference>
<dbReference type="InterPro" id="IPR047045">
    <property type="entry name" value="CobQ_N"/>
</dbReference>
<dbReference type="InterPro" id="IPR004459">
    <property type="entry name" value="CobQ_synth"/>
</dbReference>
<dbReference type="InterPro" id="IPR011698">
    <property type="entry name" value="GATase_3"/>
</dbReference>
<dbReference type="InterPro" id="IPR027417">
    <property type="entry name" value="P-loop_NTPase"/>
</dbReference>
<dbReference type="NCBIfam" id="TIGR00313">
    <property type="entry name" value="cobQ"/>
    <property type="match status" value="1"/>
</dbReference>
<dbReference type="NCBIfam" id="NF001989">
    <property type="entry name" value="PRK00784.1"/>
    <property type="match status" value="1"/>
</dbReference>
<dbReference type="PANTHER" id="PTHR21343:SF1">
    <property type="entry name" value="COBYRIC ACID SYNTHASE"/>
    <property type="match status" value="1"/>
</dbReference>
<dbReference type="PANTHER" id="PTHR21343">
    <property type="entry name" value="DETHIOBIOTIN SYNTHETASE"/>
    <property type="match status" value="1"/>
</dbReference>
<dbReference type="Pfam" id="PF01656">
    <property type="entry name" value="CbiA"/>
    <property type="match status" value="1"/>
</dbReference>
<dbReference type="Pfam" id="PF07685">
    <property type="entry name" value="GATase_3"/>
    <property type="match status" value="1"/>
</dbReference>
<dbReference type="SUPFAM" id="SSF52317">
    <property type="entry name" value="Class I glutamine amidotransferase-like"/>
    <property type="match status" value="1"/>
</dbReference>
<dbReference type="SUPFAM" id="SSF52540">
    <property type="entry name" value="P-loop containing nucleoside triphosphate hydrolases"/>
    <property type="match status" value="1"/>
</dbReference>
<dbReference type="PROSITE" id="PS51274">
    <property type="entry name" value="GATASE_COBBQ"/>
    <property type="match status" value="1"/>
</dbReference>
<proteinExistence type="inferred from homology"/>
<protein>
    <recommendedName>
        <fullName evidence="1">Cobyric acid synthase</fullName>
    </recommendedName>
</protein>
<sequence length="511" mass="56163">MVKQIMIQGTASDAGKSVLVAGLCRLFKNKGKRVVPFKSQNMSLNSFITATGDEMGRAQVFQAEAAGVFPDVRMNPVLLKPTNDRQSQVIFMGAILDNMDAVTYHDFKQTLIPKIQAVYQSLADENDIIVLEGAGSPAEINLNDRDIVNMGMAKMVDAPVVLVADIDKGGVFASIYGTIMLLNEEERARIKGVIINKFRGDVALLQPGIDMIEELTNVPVIGVIPYANLQLEEEDSVSLSGKNYVPDSNALLDIAIICLPRISNFTDFHILEIQPDISVRYIRNIADFGNPDLVIIPGSKNTLEDMAFLEESGLKNAIQNYAKNAGKVIGICGGYQMLGKKMLDPNQVESKQLEIAGLGLLDTETIFLDQKRTTQITGVTHSGEAVEGYEIHMGETKRGESTSPFCEIKAVNGNEETHQDGAISVNKNIIGTYIHGIFDNDVFLGNLFDELLTGKNKSVYPHEIINLKEHKEQEYDKLAALLEANIQMDQLEKIMKGEKICVSTQKPAIKE</sequence>